<keyword id="KW-0963">Cytoplasm</keyword>
<keyword id="KW-0206">Cytoskeleton</keyword>
<keyword id="KW-1185">Reference proteome</keyword>
<gene>
    <name type="primary">cep76</name>
    <name type="ORF">zgc:162328</name>
</gene>
<protein>
    <recommendedName>
        <fullName>Centrosomal protein of 76 kDa</fullName>
        <shortName>Cep76</shortName>
    </recommendedName>
</protein>
<comment type="function">
    <text evidence="1">Centrosomal protein involved in regulation of centriole duplication. Required to limit centriole duplication to once per cell cycle by preventing centriole reduplication (By similarity).</text>
</comment>
<comment type="subcellular location">
    <subcellularLocation>
        <location evidence="1">Cytoplasm</location>
        <location evidence="1">Cytoskeleton</location>
        <location evidence="1">Microtubule organizing center</location>
        <location evidence="1">Centrosome</location>
    </subcellularLocation>
    <subcellularLocation>
        <location evidence="1">Cytoplasm</location>
        <location evidence="1">Cytoskeleton</location>
        <location evidence="1">Microtubule organizing center</location>
        <location evidence="1">Centrosome</location>
        <location evidence="1">Centriole</location>
    </subcellularLocation>
    <text evidence="1">Does not localize along the ciliary axoneme.</text>
</comment>
<comment type="similarity">
    <text evidence="2">Belongs to the CEP76 family.</text>
</comment>
<name>CEP76_DANRE</name>
<sequence>MSLSPEKANELKQIIHDHLIKMDIHGKIRDVLTETVQGDGHHKQCLLSEEDFMHALQRRGIVNDVMKDLHFTNMYNSHTEADSVNKSATHFMDQNITQLKTANIGQLKRQLYLQVVGGKAFLEQLQEPEPLPGQVCSTFTLHVHFRNQRFRSKPIPCACEPDIQEGFLLEIHRDGPGDASKMADATTMLSICDPVHMVLIKTDTSGDTTLVSSYFLDWRTVLSAPNGKISVSAELLGVGAEAKVPAGVLNLKLELYPPLTETLSPDVVTMQKSLERQKTAEKERLFLVYAKQWWQEFLDIRPSNKSKLVKIFAQDENGVNRPVCSYVRVLRAGRLLESPRQAARFVSLLAQERAPVVGGGVRQEQWASMMVFLCRNKGDCEDHATLLCSLLLGFGLDAYVCVGTKVKNIPHTWVMTCGTDGSITFWESFTAHRYLHRPIDPDAPSMILQPKPVHPYQTLGCVFNHKIFLANCQVSDAVERCVFDFTDGSRWKAMSEEAVRSVCDPGFNTSLPPTPPLCSSSLVPNEASNQLELEMRYLLSEHRKDLGLATVWDDHLSYLLSAALSAYELERCAGVSYGNEEFQDAVRRAVPDGHTFKAFPINFLHCNARRAFATCLRSPFCEEIVCCRGDHVRLAVRVRVFGYPESACAVWIMFACKYRSVL</sequence>
<evidence type="ECO:0000250" key="1"/>
<evidence type="ECO:0000305" key="2"/>
<feature type="chain" id="PRO_0000378950" description="Centrosomal protein of 76 kDa">
    <location>
        <begin position="1"/>
        <end position="662"/>
    </location>
</feature>
<reference key="1">
    <citation type="submission" date="2007-07" db="EMBL/GenBank/DDBJ databases">
        <authorList>
            <consortium name="NIH - Zebrafish Gene Collection (ZGC) project"/>
        </authorList>
    </citation>
    <scope>NUCLEOTIDE SEQUENCE [LARGE SCALE MRNA]</scope>
</reference>
<organism>
    <name type="scientific">Danio rerio</name>
    <name type="common">Zebrafish</name>
    <name type="synonym">Brachydanio rerio</name>
    <dbReference type="NCBI Taxonomy" id="7955"/>
    <lineage>
        <taxon>Eukaryota</taxon>
        <taxon>Metazoa</taxon>
        <taxon>Chordata</taxon>
        <taxon>Craniata</taxon>
        <taxon>Vertebrata</taxon>
        <taxon>Euteleostomi</taxon>
        <taxon>Actinopterygii</taxon>
        <taxon>Neopterygii</taxon>
        <taxon>Teleostei</taxon>
        <taxon>Ostariophysi</taxon>
        <taxon>Cypriniformes</taxon>
        <taxon>Danionidae</taxon>
        <taxon>Danioninae</taxon>
        <taxon>Danio</taxon>
    </lineage>
</organism>
<accession>A7E2V1</accession>
<dbReference type="EMBL" id="BC151203">
    <property type="protein sequence ID" value="AAI51204.1"/>
    <property type="molecule type" value="mRNA"/>
</dbReference>
<dbReference type="SMR" id="A7E2V1"/>
<dbReference type="FunCoup" id="A7E2V1">
    <property type="interactions" value="345"/>
</dbReference>
<dbReference type="STRING" id="7955.ENSDARP00000075595"/>
<dbReference type="PaxDb" id="7955-ENSDARP00000075595"/>
<dbReference type="AGR" id="ZFIN:ZDB-GENE-070820-5"/>
<dbReference type="ZFIN" id="ZDB-GENE-070820-5">
    <property type="gene designation" value="cep76"/>
</dbReference>
<dbReference type="eggNOG" id="ENOG502QQEI">
    <property type="taxonomic scope" value="Eukaryota"/>
</dbReference>
<dbReference type="InParanoid" id="A7E2V1"/>
<dbReference type="PhylomeDB" id="A7E2V1"/>
<dbReference type="PRO" id="PR:A7E2V1"/>
<dbReference type="Proteomes" id="UP000000437">
    <property type="component" value="Unplaced"/>
</dbReference>
<dbReference type="GO" id="GO:0005814">
    <property type="term" value="C:centriole"/>
    <property type="evidence" value="ECO:0000250"/>
    <property type="project" value="UniProtKB"/>
</dbReference>
<dbReference type="GO" id="GO:0005813">
    <property type="term" value="C:centrosome"/>
    <property type="evidence" value="ECO:0007669"/>
    <property type="project" value="UniProtKB-SubCell"/>
</dbReference>
<dbReference type="GO" id="GO:0005737">
    <property type="term" value="C:cytoplasm"/>
    <property type="evidence" value="ECO:0007669"/>
    <property type="project" value="UniProtKB-KW"/>
</dbReference>
<dbReference type="GO" id="GO:0046599">
    <property type="term" value="P:regulation of centriole replication"/>
    <property type="evidence" value="ECO:0000250"/>
    <property type="project" value="UniProtKB"/>
</dbReference>
<dbReference type="Gene3D" id="3.10.620.30">
    <property type="match status" value="1"/>
</dbReference>
<dbReference type="InterPro" id="IPR052299">
    <property type="entry name" value="CEP76"/>
</dbReference>
<dbReference type="InterPro" id="IPR028926">
    <property type="entry name" value="CEP76-C2"/>
</dbReference>
<dbReference type="InterPro" id="IPR056288">
    <property type="entry name" value="CEP76_C"/>
</dbReference>
<dbReference type="InterPro" id="IPR056289">
    <property type="entry name" value="CEP76_N"/>
</dbReference>
<dbReference type="InterPro" id="IPR056290">
    <property type="entry name" value="CEPT76/DRC7_peptidase-like_dom"/>
</dbReference>
<dbReference type="InterPro" id="IPR038765">
    <property type="entry name" value="Papain-like_cys_pep_sf"/>
</dbReference>
<dbReference type="PANTHER" id="PTHR46436">
    <property type="entry name" value="CENTROSOMAL PROTEIN OF 76 KDA"/>
    <property type="match status" value="1"/>
</dbReference>
<dbReference type="PANTHER" id="PTHR46436:SF1">
    <property type="entry name" value="CENTROSOMAL PROTEIN OF 76 KDA"/>
    <property type="match status" value="1"/>
</dbReference>
<dbReference type="Pfam" id="PF15627">
    <property type="entry name" value="CEP76-C2"/>
    <property type="match status" value="1"/>
</dbReference>
<dbReference type="Pfam" id="PF24652">
    <property type="entry name" value="CEP76_C"/>
    <property type="match status" value="1"/>
</dbReference>
<dbReference type="Pfam" id="PF24654">
    <property type="entry name" value="CEP76_N"/>
    <property type="match status" value="1"/>
</dbReference>
<dbReference type="Pfam" id="PF24656">
    <property type="entry name" value="CEPT76_peptidase"/>
    <property type="match status" value="1"/>
</dbReference>
<dbReference type="SUPFAM" id="SSF54001">
    <property type="entry name" value="Cysteine proteinases"/>
    <property type="match status" value="1"/>
</dbReference>
<proteinExistence type="evidence at transcript level"/>